<sequence length="92" mass="10444">MARSVWKGPFVDGYLLKKAEKVREGGRNEVIKMWSRRSTILPQFVGLTFGVYNGNKHVPVSVSEEMVGHKFGEFAPTRTYYGHGADKKAKRK</sequence>
<proteinExistence type="inferred from homology"/>
<keyword id="KW-0687">Ribonucleoprotein</keyword>
<keyword id="KW-0689">Ribosomal protein</keyword>
<keyword id="KW-0694">RNA-binding</keyword>
<keyword id="KW-0699">rRNA-binding</keyword>
<protein>
    <recommendedName>
        <fullName evidence="1">Small ribosomal subunit protein uS19</fullName>
    </recommendedName>
    <alternativeName>
        <fullName evidence="2">30S ribosomal protein S19</fullName>
    </alternativeName>
</protein>
<accession>P66489</accession>
<accession>Q8YHN6</accession>
<accession>Q92QG6</accession>
<evidence type="ECO:0000255" key="1">
    <source>
        <dbReference type="HAMAP-Rule" id="MF_00531"/>
    </source>
</evidence>
<evidence type="ECO:0000305" key="2"/>
<dbReference type="EMBL" id="AE008917">
    <property type="protein sequence ID" value="AAL51942.1"/>
    <property type="molecule type" value="Genomic_DNA"/>
</dbReference>
<dbReference type="PIR" id="AC3347">
    <property type="entry name" value="AC3347"/>
</dbReference>
<dbReference type="RefSeq" id="WP_002964358.1">
    <property type="nucleotide sequence ID" value="NZ_GG703780.1"/>
</dbReference>
<dbReference type="SMR" id="P66489"/>
<dbReference type="GeneID" id="97533528"/>
<dbReference type="KEGG" id="bme:BMEI0761"/>
<dbReference type="KEGG" id="bmel:DK63_661"/>
<dbReference type="PATRIC" id="fig|224914.52.peg.692"/>
<dbReference type="eggNOG" id="COG0185">
    <property type="taxonomic scope" value="Bacteria"/>
</dbReference>
<dbReference type="Proteomes" id="UP000000419">
    <property type="component" value="Chromosome I"/>
</dbReference>
<dbReference type="GO" id="GO:0005737">
    <property type="term" value="C:cytoplasm"/>
    <property type="evidence" value="ECO:0007669"/>
    <property type="project" value="UniProtKB-ARBA"/>
</dbReference>
<dbReference type="GO" id="GO:0015935">
    <property type="term" value="C:small ribosomal subunit"/>
    <property type="evidence" value="ECO:0007669"/>
    <property type="project" value="InterPro"/>
</dbReference>
<dbReference type="GO" id="GO:0019843">
    <property type="term" value="F:rRNA binding"/>
    <property type="evidence" value="ECO:0007669"/>
    <property type="project" value="UniProtKB-UniRule"/>
</dbReference>
<dbReference type="GO" id="GO:0003735">
    <property type="term" value="F:structural constituent of ribosome"/>
    <property type="evidence" value="ECO:0007669"/>
    <property type="project" value="InterPro"/>
</dbReference>
<dbReference type="GO" id="GO:0000028">
    <property type="term" value="P:ribosomal small subunit assembly"/>
    <property type="evidence" value="ECO:0007669"/>
    <property type="project" value="TreeGrafter"/>
</dbReference>
<dbReference type="GO" id="GO:0006412">
    <property type="term" value="P:translation"/>
    <property type="evidence" value="ECO:0007669"/>
    <property type="project" value="UniProtKB-UniRule"/>
</dbReference>
<dbReference type="FunFam" id="3.30.860.10:FF:000001">
    <property type="entry name" value="30S ribosomal protein S19"/>
    <property type="match status" value="1"/>
</dbReference>
<dbReference type="Gene3D" id="3.30.860.10">
    <property type="entry name" value="30s Ribosomal Protein S19, Chain A"/>
    <property type="match status" value="1"/>
</dbReference>
<dbReference type="HAMAP" id="MF_00531">
    <property type="entry name" value="Ribosomal_uS19"/>
    <property type="match status" value="1"/>
</dbReference>
<dbReference type="InterPro" id="IPR002222">
    <property type="entry name" value="Ribosomal_uS19"/>
</dbReference>
<dbReference type="InterPro" id="IPR005732">
    <property type="entry name" value="Ribosomal_uS19_bac-type"/>
</dbReference>
<dbReference type="InterPro" id="IPR020934">
    <property type="entry name" value="Ribosomal_uS19_CS"/>
</dbReference>
<dbReference type="InterPro" id="IPR023575">
    <property type="entry name" value="Ribosomal_uS19_SF"/>
</dbReference>
<dbReference type="NCBIfam" id="TIGR01050">
    <property type="entry name" value="rpsS_bact"/>
    <property type="match status" value="1"/>
</dbReference>
<dbReference type="PANTHER" id="PTHR11880">
    <property type="entry name" value="RIBOSOMAL PROTEIN S19P FAMILY MEMBER"/>
    <property type="match status" value="1"/>
</dbReference>
<dbReference type="PANTHER" id="PTHR11880:SF8">
    <property type="entry name" value="SMALL RIBOSOMAL SUBUNIT PROTEIN US19M"/>
    <property type="match status" value="1"/>
</dbReference>
<dbReference type="Pfam" id="PF00203">
    <property type="entry name" value="Ribosomal_S19"/>
    <property type="match status" value="1"/>
</dbReference>
<dbReference type="PIRSF" id="PIRSF002144">
    <property type="entry name" value="Ribosomal_S19"/>
    <property type="match status" value="1"/>
</dbReference>
<dbReference type="PRINTS" id="PR00975">
    <property type="entry name" value="RIBOSOMALS19"/>
</dbReference>
<dbReference type="SUPFAM" id="SSF54570">
    <property type="entry name" value="Ribosomal protein S19"/>
    <property type="match status" value="1"/>
</dbReference>
<dbReference type="PROSITE" id="PS00323">
    <property type="entry name" value="RIBOSOMAL_S19"/>
    <property type="match status" value="1"/>
</dbReference>
<name>RS19_BRUME</name>
<feature type="chain" id="PRO_0000129792" description="Small ribosomal subunit protein uS19">
    <location>
        <begin position="1"/>
        <end position="92"/>
    </location>
</feature>
<gene>
    <name evidence="1" type="primary">rpsS</name>
    <name type="ordered locus">BMEI0761</name>
</gene>
<organism>
    <name type="scientific">Brucella melitensis biotype 1 (strain ATCC 23456 / CCUG 17765 / NCTC 10094 / 16M)</name>
    <dbReference type="NCBI Taxonomy" id="224914"/>
    <lineage>
        <taxon>Bacteria</taxon>
        <taxon>Pseudomonadati</taxon>
        <taxon>Pseudomonadota</taxon>
        <taxon>Alphaproteobacteria</taxon>
        <taxon>Hyphomicrobiales</taxon>
        <taxon>Brucellaceae</taxon>
        <taxon>Brucella/Ochrobactrum group</taxon>
        <taxon>Brucella</taxon>
    </lineage>
</organism>
<comment type="function">
    <text evidence="1">Protein S19 forms a complex with S13 that binds strongly to the 16S ribosomal RNA.</text>
</comment>
<comment type="similarity">
    <text evidence="1">Belongs to the universal ribosomal protein uS19 family.</text>
</comment>
<reference key="1">
    <citation type="journal article" date="2002" name="Proc. Natl. Acad. Sci. U.S.A.">
        <title>The genome sequence of the facultative intracellular pathogen Brucella melitensis.</title>
        <authorList>
            <person name="DelVecchio V.G."/>
            <person name="Kapatral V."/>
            <person name="Redkar R.J."/>
            <person name="Patra G."/>
            <person name="Mujer C."/>
            <person name="Los T."/>
            <person name="Ivanova N."/>
            <person name="Anderson I."/>
            <person name="Bhattacharyya A."/>
            <person name="Lykidis A."/>
            <person name="Reznik G."/>
            <person name="Jablonski L."/>
            <person name="Larsen N."/>
            <person name="D'Souza M."/>
            <person name="Bernal A."/>
            <person name="Mazur M."/>
            <person name="Goltsman E."/>
            <person name="Selkov E."/>
            <person name="Elzer P.H."/>
            <person name="Hagius S."/>
            <person name="O'Callaghan D."/>
            <person name="Letesson J.-J."/>
            <person name="Haselkorn R."/>
            <person name="Kyrpides N.C."/>
            <person name="Overbeek R."/>
        </authorList>
    </citation>
    <scope>NUCLEOTIDE SEQUENCE [LARGE SCALE GENOMIC DNA]</scope>
    <source>
        <strain>ATCC 23456 / CCUG 17765 / NCTC 10094 / 16M</strain>
    </source>
</reference>